<protein>
    <recommendedName>
        <fullName evidence="3">Wilms tumor protein homolog</fullName>
    </recommendedName>
</protein>
<proteinExistence type="evidence at transcript level"/>
<accession>B5DE03</accession>
<feature type="chain" id="PRO_0000391389" description="Wilms tumor protein homolog">
    <location>
        <begin position="1"/>
        <end position="413"/>
    </location>
</feature>
<feature type="zinc finger region" description="C2H2-type 1" evidence="5">
    <location>
        <begin position="290"/>
        <end position="314"/>
    </location>
</feature>
<feature type="zinc finger region" description="C2H2-type 2" evidence="5">
    <location>
        <begin position="320"/>
        <end position="344"/>
    </location>
</feature>
<feature type="zinc finger region" description="C2H2-type 3" evidence="5">
    <location>
        <begin position="350"/>
        <end position="372"/>
    </location>
</feature>
<feature type="zinc finger region" description="C2H2-type 4" evidence="5">
    <location>
        <begin position="378"/>
        <end position="402"/>
    </location>
</feature>
<feature type="region of interest" description="Important for interaction with target DNA" evidence="2">
    <location>
        <begin position="334"/>
        <end position="348"/>
    </location>
</feature>
<feature type="region of interest" description="Important for interaction with target DNA" evidence="2">
    <location>
        <begin position="360"/>
        <end position="368"/>
    </location>
</feature>
<feature type="short sequence motif" description="9aaTAD" evidence="2">
    <location>
        <begin position="218"/>
        <end position="226"/>
    </location>
</feature>
<feature type="site" description="Important for interaction with target DNA" evidence="2">
    <location>
        <position position="388"/>
    </location>
</feature>
<feature type="site" description="Important for interaction with target DNA" evidence="2">
    <location>
        <position position="394"/>
    </location>
</feature>
<feature type="cross-link" description="Glycyl lysine isopeptide (Lys-Gly) (interchain with G-Cter in SUMO)" evidence="2">
    <location>
        <position position="56"/>
    </location>
</feature>
<feature type="cross-link" description="Glycyl lysine isopeptide (Lys-Gly) (interchain with G-Cter in SUMO)" evidence="2">
    <location>
        <position position="159"/>
    </location>
</feature>
<keyword id="KW-0963">Cytoplasm</keyword>
<keyword id="KW-0217">Developmental protein</keyword>
<keyword id="KW-0238">DNA-binding</keyword>
<keyword id="KW-1017">Isopeptide bond</keyword>
<keyword id="KW-0479">Metal-binding</keyword>
<keyword id="KW-0539">Nucleus</keyword>
<keyword id="KW-1185">Reference proteome</keyword>
<keyword id="KW-0677">Repeat</keyword>
<keyword id="KW-0691">RNA editing</keyword>
<keyword id="KW-0694">RNA-binding</keyword>
<keyword id="KW-0804">Transcription</keyword>
<keyword id="KW-0805">Transcription regulation</keyword>
<keyword id="KW-0043">Tumor suppressor</keyword>
<keyword id="KW-0832">Ubl conjugation</keyword>
<keyword id="KW-0879">Wnt signaling pathway</keyword>
<keyword id="KW-0862">Zinc</keyword>
<keyword id="KW-0863">Zinc-finger</keyword>
<reference evidence="6" key="1">
    <citation type="submission" date="2008-08" db="EMBL/GenBank/DDBJ databases">
        <authorList>
            <consortium name="NIH - Xenopus Gene Collection (XGC) project"/>
        </authorList>
    </citation>
    <scope>NUCLEOTIDE SEQUENCE [LARGE SCALE MRNA]</scope>
    <source>
        <tissue evidence="6">Testis</tissue>
    </source>
</reference>
<comment type="function">
    <text evidence="1 2">Transcription factor required for development of the vascular component of the pronephric kidney, the glomus; may repress tubule-specific gene expression in the portion of the pronephros fated to form the glomus (By similarity). Recognizes and binds to the DNA sequence 5'-GCG(T/G)GGGCG-3' (By similarity). Inhibits Wnt-signaling during embryonic development (By similarity).</text>
</comment>
<comment type="subcellular location">
    <subcellularLocation>
        <location evidence="3">Nucleus</location>
    </subcellularLocation>
    <subcellularLocation>
        <location evidence="3">Cytoplasm</location>
    </subcellularLocation>
    <subcellularLocation>
        <location evidence="3">Nucleus speckle</location>
    </subcellularLocation>
    <text evidence="3">Shuttles between nucleus and cytoplasm.</text>
</comment>
<comment type="domain">
    <text evidence="2">Binds to DNA motifs with the sequence 5'-GCG(T/G)GGGCG-3' via its C2H2-type zinc fingers. Starting from the N-terminus, the second zinc finger binds to the 3'-GCG motif, the middle zinc finger interacts with the central TGG motif, and the C-terminal zinc finger binds to the 5'-GCG motif. Binds double-stranded target DNA, irrespective of the cytosine methylation status. Has reduced affinity for target DNA where the cytosines have been oxidized to 5-hydroxymethylcytosine, 5-formylcytosine or 5-carboxylcytosine.</text>
</comment>
<comment type="domain">
    <text evidence="2">The 9aaTAD motif is a transactivation domain present in a large number of yeast and animal transcription factors.</text>
</comment>
<comment type="similarity">
    <text evidence="4">Belongs to the EGR C2H2-type zinc-finger protein family.</text>
</comment>
<evidence type="ECO:0000250" key="1">
    <source>
        <dbReference type="UniProtKB" id="B7ZSG3"/>
    </source>
</evidence>
<evidence type="ECO:0000250" key="2">
    <source>
        <dbReference type="UniProtKB" id="P19544"/>
    </source>
</evidence>
<evidence type="ECO:0000250" key="3">
    <source>
        <dbReference type="UniProtKB" id="P22561"/>
    </source>
</evidence>
<evidence type="ECO:0000255" key="4"/>
<evidence type="ECO:0000255" key="5">
    <source>
        <dbReference type="PROSITE-ProRule" id="PRU00042"/>
    </source>
</evidence>
<evidence type="ECO:0000312" key="6">
    <source>
        <dbReference type="EMBL" id="AAI68476.1"/>
    </source>
</evidence>
<name>WT1_XENTR</name>
<dbReference type="EMBL" id="BC168476">
    <property type="protein sequence ID" value="AAI68476.1"/>
    <property type="molecule type" value="mRNA"/>
</dbReference>
<dbReference type="RefSeq" id="NP_001135625.1">
    <property type="nucleotide sequence ID" value="NM_001142153.1"/>
</dbReference>
<dbReference type="BMRB" id="B5DE03"/>
<dbReference type="SMR" id="B5DE03"/>
<dbReference type="FunCoup" id="B5DE03">
    <property type="interactions" value="1928"/>
</dbReference>
<dbReference type="STRING" id="8364.ENSXETP00000028967"/>
<dbReference type="GeneID" id="100216184"/>
<dbReference type="KEGG" id="xtr:100216184"/>
<dbReference type="AGR" id="Xenbase:XB-GENE-484999"/>
<dbReference type="CTD" id="7490"/>
<dbReference type="Xenbase" id="XB-GENE-484999">
    <property type="gene designation" value="wt1"/>
</dbReference>
<dbReference type="InParanoid" id="B5DE03"/>
<dbReference type="OrthoDB" id="8922241at2759"/>
<dbReference type="Proteomes" id="UP000008143">
    <property type="component" value="Chromosome 4"/>
</dbReference>
<dbReference type="Bgee" id="ENSXETG00000040519">
    <property type="expression patterns" value="Expressed in testis and 5 other cell types or tissues"/>
</dbReference>
<dbReference type="ExpressionAtlas" id="B5DE03">
    <property type="expression patterns" value="differential"/>
</dbReference>
<dbReference type="GO" id="GO:0005737">
    <property type="term" value="C:cytoplasm"/>
    <property type="evidence" value="ECO:0007669"/>
    <property type="project" value="UniProtKB-SubCell"/>
</dbReference>
<dbReference type="GO" id="GO:0016607">
    <property type="term" value="C:nuclear speck"/>
    <property type="evidence" value="ECO:0007669"/>
    <property type="project" value="UniProtKB-SubCell"/>
</dbReference>
<dbReference type="GO" id="GO:0010385">
    <property type="term" value="F:double-stranded methylated DNA binding"/>
    <property type="evidence" value="ECO:0000250"/>
    <property type="project" value="UniProtKB"/>
</dbReference>
<dbReference type="GO" id="GO:0044729">
    <property type="term" value="F:hemi-methylated DNA-binding"/>
    <property type="evidence" value="ECO:0000250"/>
    <property type="project" value="UniProtKB"/>
</dbReference>
<dbReference type="GO" id="GO:0003723">
    <property type="term" value="F:RNA binding"/>
    <property type="evidence" value="ECO:0007669"/>
    <property type="project" value="UniProtKB-KW"/>
</dbReference>
<dbReference type="GO" id="GO:0043565">
    <property type="term" value="F:sequence-specific DNA binding"/>
    <property type="evidence" value="ECO:0000250"/>
    <property type="project" value="UniProtKB"/>
</dbReference>
<dbReference type="GO" id="GO:0008270">
    <property type="term" value="F:zinc ion binding"/>
    <property type="evidence" value="ECO:0000250"/>
    <property type="project" value="UniProtKB"/>
</dbReference>
<dbReference type="GO" id="GO:0072013">
    <property type="term" value="P:glomus development"/>
    <property type="evidence" value="ECO:0000250"/>
    <property type="project" value="UniProtKB"/>
</dbReference>
<dbReference type="GO" id="GO:0000122">
    <property type="term" value="P:negative regulation of transcription by RNA polymerase II"/>
    <property type="evidence" value="ECO:0000250"/>
    <property type="project" value="UniProtKB"/>
</dbReference>
<dbReference type="GO" id="GO:0030178">
    <property type="term" value="P:negative regulation of Wnt signaling pathway"/>
    <property type="evidence" value="ECO:0000250"/>
    <property type="project" value="UniProtKB"/>
</dbReference>
<dbReference type="GO" id="GO:0048793">
    <property type="term" value="P:pronephros development"/>
    <property type="evidence" value="ECO:0000250"/>
    <property type="project" value="UniProtKB"/>
</dbReference>
<dbReference type="GO" id="GO:0016055">
    <property type="term" value="P:Wnt signaling pathway"/>
    <property type="evidence" value="ECO:0007669"/>
    <property type="project" value="UniProtKB-KW"/>
</dbReference>
<dbReference type="FunFam" id="3.30.160.60:FF:000460">
    <property type="entry name" value="Putative zinc finger protein 740"/>
    <property type="match status" value="1"/>
</dbReference>
<dbReference type="FunFam" id="3.30.160.60:FF:000228">
    <property type="entry name" value="Wilms tumor 1-KTS isoform"/>
    <property type="match status" value="1"/>
</dbReference>
<dbReference type="FunFam" id="3.30.160.60:FF:001092">
    <property type="entry name" value="Wilms tumor protein isoform X2"/>
    <property type="match status" value="1"/>
</dbReference>
<dbReference type="FunFam" id="3.30.160.60:FF:000072">
    <property type="entry name" value="zinc finger protein 143 isoform X1"/>
    <property type="match status" value="1"/>
</dbReference>
<dbReference type="Gene3D" id="3.30.160.60">
    <property type="entry name" value="Classic Zinc Finger"/>
    <property type="match status" value="4"/>
</dbReference>
<dbReference type="InterPro" id="IPR000976">
    <property type="entry name" value="Wilms_tumour_N"/>
</dbReference>
<dbReference type="InterPro" id="IPR036236">
    <property type="entry name" value="Znf_C2H2_sf"/>
</dbReference>
<dbReference type="InterPro" id="IPR013087">
    <property type="entry name" value="Znf_C2H2_type"/>
</dbReference>
<dbReference type="PANTHER" id="PTHR23235:SF164">
    <property type="entry name" value="C2H2-TYPE DOMAIN-CONTAINING PROTEIN"/>
    <property type="match status" value="1"/>
</dbReference>
<dbReference type="PANTHER" id="PTHR23235">
    <property type="entry name" value="KRUEPPEL-LIKE TRANSCRIPTION FACTOR"/>
    <property type="match status" value="1"/>
</dbReference>
<dbReference type="Pfam" id="PF02165">
    <property type="entry name" value="WT1"/>
    <property type="match status" value="1"/>
</dbReference>
<dbReference type="Pfam" id="PF00096">
    <property type="entry name" value="zf-C2H2"/>
    <property type="match status" value="3"/>
</dbReference>
<dbReference type="PRINTS" id="PR00049">
    <property type="entry name" value="WILMSTUMOUR"/>
</dbReference>
<dbReference type="SMART" id="SM00355">
    <property type="entry name" value="ZnF_C2H2"/>
    <property type="match status" value="4"/>
</dbReference>
<dbReference type="SUPFAM" id="SSF57667">
    <property type="entry name" value="beta-beta-alpha zinc fingers"/>
    <property type="match status" value="2"/>
</dbReference>
<dbReference type="PROSITE" id="PS00028">
    <property type="entry name" value="ZINC_FINGER_C2H2_1"/>
    <property type="match status" value="4"/>
</dbReference>
<dbReference type="PROSITE" id="PS50157">
    <property type="entry name" value="ZINC_FINGER_C2H2_2"/>
    <property type="match status" value="4"/>
</dbReference>
<organism>
    <name type="scientific">Xenopus tropicalis</name>
    <name type="common">Western clawed frog</name>
    <name type="synonym">Silurana tropicalis</name>
    <dbReference type="NCBI Taxonomy" id="8364"/>
    <lineage>
        <taxon>Eukaryota</taxon>
        <taxon>Metazoa</taxon>
        <taxon>Chordata</taxon>
        <taxon>Craniata</taxon>
        <taxon>Vertebrata</taxon>
        <taxon>Euteleostomi</taxon>
        <taxon>Amphibia</taxon>
        <taxon>Batrachia</taxon>
        <taxon>Anura</taxon>
        <taxon>Pipoidea</taxon>
        <taxon>Pipidae</taxon>
        <taxon>Xenopodinae</taxon>
        <taxon>Xenopus</taxon>
        <taxon>Silurana</taxon>
    </lineage>
</organism>
<sequence>MGSDVRDMNALLPPVSTLSGNSSCSMPVSSSGQWAPVLDFPPGAPYSSLPPHSFIKQEPTWNPDPHEDQCLSAFTVHFSGQFTGTAGACRYGAFGAPTPSQATTGQARMFPNSPYLSNCLDNQQGMRNQGYSAVAFDGTPSYGHTPSHHTAQFTNHSFKHEDPMGQQTSLGEQQYSVPPPVYGCHTPTDSCTGSQALLLRTPYNSDNLYQMTSQLECMTWNQMNLGSSLKSHGTSYENDSHSTPMLYSCGGQYRIHTHGVFRGIQDVRRVPGVTPAIVRSSTEANEKRPFMCAYPGCNKRYFKLSHLQMHSRKHTGEKPYQCDFKDCERRFSRSDQLKRHQRRHTGIKPFQCKTCQRKFSRSDHLKTHTRTHTGEKPFSCRWPSCQKKFARSDELVRHHNMHQRNMTKLQLAL</sequence>
<gene>
    <name type="primary">wt1</name>
</gene>